<protein>
    <recommendedName>
        <fullName evidence="1">NAD kinase</fullName>
        <ecNumber evidence="1">2.7.1.23</ecNumber>
    </recommendedName>
    <alternativeName>
        <fullName evidence="1">ATP-dependent NAD kinase</fullName>
    </alternativeName>
</protein>
<sequence>MKDSHQTIGVFVRPTHYQNPLFEELERAKEWVLKLLEDEGFESFMIDSLDGAQDERLIEKAYAFLCLGGDGTILGALRMTHSYNKPCFGVRIGNLGFLSAVELNGLKDFLQDLKQDRIKLEEHLALEGRIGKISFYAINEIVIAKKKALGVLDIKAYAGHTPFNTYKGDGLIIATPLGSTAYNLSAHGPIVHALSQSYILTPLCDFSLTQRPLVLGAEFCLNFCAHEDALVVIDGQATYDLKANQPLYIQKSPTTTKLLQKNSRDYFKVLKEKLLWGESPSKKR</sequence>
<dbReference type="EC" id="2.7.1.23" evidence="1"/>
<dbReference type="EMBL" id="CP001173">
    <property type="protein sequence ID" value="ACI28207.1"/>
    <property type="molecule type" value="Genomic_DNA"/>
</dbReference>
<dbReference type="RefSeq" id="WP_012552588.1">
    <property type="nucleotide sequence ID" value="NC_011333.1"/>
</dbReference>
<dbReference type="SMR" id="B5Z9F8"/>
<dbReference type="KEGG" id="hpg:HPG27_1465"/>
<dbReference type="HOGENOM" id="CLU_008831_0_3_7"/>
<dbReference type="Proteomes" id="UP000001735">
    <property type="component" value="Chromosome"/>
</dbReference>
<dbReference type="GO" id="GO:0005737">
    <property type="term" value="C:cytoplasm"/>
    <property type="evidence" value="ECO:0007669"/>
    <property type="project" value="UniProtKB-SubCell"/>
</dbReference>
<dbReference type="GO" id="GO:0005524">
    <property type="term" value="F:ATP binding"/>
    <property type="evidence" value="ECO:0007669"/>
    <property type="project" value="UniProtKB-KW"/>
</dbReference>
<dbReference type="GO" id="GO:0046872">
    <property type="term" value="F:metal ion binding"/>
    <property type="evidence" value="ECO:0007669"/>
    <property type="project" value="UniProtKB-UniRule"/>
</dbReference>
<dbReference type="GO" id="GO:0051287">
    <property type="term" value="F:NAD binding"/>
    <property type="evidence" value="ECO:0007669"/>
    <property type="project" value="UniProtKB-ARBA"/>
</dbReference>
<dbReference type="GO" id="GO:0003951">
    <property type="term" value="F:NAD+ kinase activity"/>
    <property type="evidence" value="ECO:0007669"/>
    <property type="project" value="UniProtKB-UniRule"/>
</dbReference>
<dbReference type="GO" id="GO:0019674">
    <property type="term" value="P:NAD metabolic process"/>
    <property type="evidence" value="ECO:0007669"/>
    <property type="project" value="InterPro"/>
</dbReference>
<dbReference type="GO" id="GO:0006741">
    <property type="term" value="P:NADP biosynthetic process"/>
    <property type="evidence" value="ECO:0007669"/>
    <property type="project" value="UniProtKB-UniRule"/>
</dbReference>
<dbReference type="Gene3D" id="3.40.50.10330">
    <property type="entry name" value="Probable inorganic polyphosphate/atp-NAD kinase, domain 1"/>
    <property type="match status" value="1"/>
</dbReference>
<dbReference type="Gene3D" id="2.60.200.30">
    <property type="entry name" value="Probable inorganic polyphosphate/atp-NAD kinase, domain 2"/>
    <property type="match status" value="1"/>
</dbReference>
<dbReference type="HAMAP" id="MF_00361">
    <property type="entry name" value="NAD_kinase"/>
    <property type="match status" value="1"/>
</dbReference>
<dbReference type="InterPro" id="IPR017438">
    <property type="entry name" value="ATP-NAD_kinase_N"/>
</dbReference>
<dbReference type="InterPro" id="IPR017437">
    <property type="entry name" value="ATP-NAD_kinase_PpnK-typ_C"/>
</dbReference>
<dbReference type="InterPro" id="IPR016064">
    <property type="entry name" value="NAD/diacylglycerol_kinase_sf"/>
</dbReference>
<dbReference type="InterPro" id="IPR002504">
    <property type="entry name" value="NADK"/>
</dbReference>
<dbReference type="PANTHER" id="PTHR20275">
    <property type="entry name" value="NAD KINASE"/>
    <property type="match status" value="1"/>
</dbReference>
<dbReference type="PANTHER" id="PTHR20275:SF0">
    <property type="entry name" value="NAD KINASE"/>
    <property type="match status" value="1"/>
</dbReference>
<dbReference type="Pfam" id="PF01513">
    <property type="entry name" value="NAD_kinase"/>
    <property type="match status" value="1"/>
</dbReference>
<dbReference type="Pfam" id="PF20143">
    <property type="entry name" value="NAD_kinase_C"/>
    <property type="match status" value="1"/>
</dbReference>
<dbReference type="SUPFAM" id="SSF111331">
    <property type="entry name" value="NAD kinase/diacylglycerol kinase-like"/>
    <property type="match status" value="1"/>
</dbReference>
<name>NADK_HELPG</name>
<feature type="chain" id="PRO_1000120867" description="NAD kinase">
    <location>
        <begin position="1"/>
        <end position="284"/>
    </location>
</feature>
<feature type="active site" description="Proton acceptor" evidence="1">
    <location>
        <position position="70"/>
    </location>
</feature>
<feature type="binding site" evidence="1">
    <location>
        <begin position="70"/>
        <end position="71"/>
    </location>
    <ligand>
        <name>NAD(+)</name>
        <dbReference type="ChEBI" id="CHEBI:57540"/>
    </ligand>
</feature>
<feature type="binding site" evidence="1">
    <location>
        <begin position="139"/>
        <end position="140"/>
    </location>
    <ligand>
        <name>NAD(+)</name>
        <dbReference type="ChEBI" id="CHEBI:57540"/>
    </ligand>
</feature>
<feature type="binding site" evidence="1">
    <location>
        <position position="167"/>
    </location>
    <ligand>
        <name>NAD(+)</name>
        <dbReference type="ChEBI" id="CHEBI:57540"/>
    </ligand>
</feature>
<feature type="binding site" evidence="1">
    <location>
        <position position="169"/>
    </location>
    <ligand>
        <name>NAD(+)</name>
        <dbReference type="ChEBI" id="CHEBI:57540"/>
    </ligand>
</feature>
<feature type="binding site" evidence="1">
    <location>
        <position position="177"/>
    </location>
    <ligand>
        <name>NAD(+)</name>
        <dbReference type="ChEBI" id="CHEBI:57540"/>
    </ligand>
</feature>
<feature type="binding site" evidence="1">
    <location>
        <begin position="180"/>
        <end position="185"/>
    </location>
    <ligand>
        <name>NAD(+)</name>
        <dbReference type="ChEBI" id="CHEBI:57540"/>
    </ligand>
</feature>
<feature type="binding site" evidence="1">
    <location>
        <position position="236"/>
    </location>
    <ligand>
        <name>NAD(+)</name>
        <dbReference type="ChEBI" id="CHEBI:57540"/>
    </ligand>
</feature>
<evidence type="ECO:0000255" key="1">
    <source>
        <dbReference type="HAMAP-Rule" id="MF_00361"/>
    </source>
</evidence>
<keyword id="KW-0067">ATP-binding</keyword>
<keyword id="KW-0963">Cytoplasm</keyword>
<keyword id="KW-0418">Kinase</keyword>
<keyword id="KW-0520">NAD</keyword>
<keyword id="KW-0521">NADP</keyword>
<keyword id="KW-0547">Nucleotide-binding</keyword>
<keyword id="KW-1185">Reference proteome</keyword>
<keyword id="KW-0808">Transferase</keyword>
<reference key="1">
    <citation type="journal article" date="2009" name="J. Bacteriol.">
        <title>The complete genome sequence of Helicobacter pylori strain G27.</title>
        <authorList>
            <person name="Baltrus D.A."/>
            <person name="Amieva M.R."/>
            <person name="Covacci A."/>
            <person name="Lowe T.M."/>
            <person name="Merrell D.S."/>
            <person name="Ottemann K.M."/>
            <person name="Stein M."/>
            <person name="Salama N.R."/>
            <person name="Guillemin K."/>
        </authorList>
    </citation>
    <scope>NUCLEOTIDE SEQUENCE [LARGE SCALE GENOMIC DNA]</scope>
    <source>
        <strain>G27</strain>
    </source>
</reference>
<comment type="function">
    <text evidence="1">Involved in the regulation of the intracellular balance of NAD and NADP, and is a key enzyme in the biosynthesis of NADP. Catalyzes specifically the phosphorylation on 2'-hydroxyl of the adenosine moiety of NAD to yield NADP.</text>
</comment>
<comment type="catalytic activity">
    <reaction evidence="1">
        <text>NAD(+) + ATP = ADP + NADP(+) + H(+)</text>
        <dbReference type="Rhea" id="RHEA:18629"/>
        <dbReference type="ChEBI" id="CHEBI:15378"/>
        <dbReference type="ChEBI" id="CHEBI:30616"/>
        <dbReference type="ChEBI" id="CHEBI:57540"/>
        <dbReference type="ChEBI" id="CHEBI:58349"/>
        <dbReference type="ChEBI" id="CHEBI:456216"/>
        <dbReference type="EC" id="2.7.1.23"/>
    </reaction>
</comment>
<comment type="cofactor">
    <cofactor evidence="1">
        <name>a divalent metal cation</name>
        <dbReference type="ChEBI" id="CHEBI:60240"/>
    </cofactor>
</comment>
<comment type="subcellular location">
    <subcellularLocation>
        <location evidence="1">Cytoplasm</location>
    </subcellularLocation>
</comment>
<comment type="similarity">
    <text evidence="1">Belongs to the NAD kinase family.</text>
</comment>
<proteinExistence type="inferred from homology"/>
<gene>
    <name evidence="1" type="primary">nadK</name>
    <name type="ordered locus">HPG27_1465</name>
</gene>
<organism>
    <name type="scientific">Helicobacter pylori (strain G27)</name>
    <dbReference type="NCBI Taxonomy" id="563041"/>
    <lineage>
        <taxon>Bacteria</taxon>
        <taxon>Pseudomonadati</taxon>
        <taxon>Campylobacterota</taxon>
        <taxon>Epsilonproteobacteria</taxon>
        <taxon>Campylobacterales</taxon>
        <taxon>Helicobacteraceae</taxon>
        <taxon>Helicobacter</taxon>
    </lineage>
</organism>
<accession>B5Z9F8</accession>